<name>CMOA_CAMJD</name>
<feature type="chain" id="PRO_0000314316" description="Carboxy-S-adenosyl-L-methionine synthase">
    <location>
        <begin position="1"/>
        <end position="235"/>
    </location>
</feature>
<feature type="binding site" evidence="1">
    <location>
        <position position="35"/>
    </location>
    <ligand>
        <name>S-adenosyl-L-methionine</name>
        <dbReference type="ChEBI" id="CHEBI:59789"/>
    </ligand>
</feature>
<feature type="binding site" evidence="1">
    <location>
        <begin position="60"/>
        <end position="62"/>
    </location>
    <ligand>
        <name>S-adenosyl-L-methionine</name>
        <dbReference type="ChEBI" id="CHEBI:59789"/>
    </ligand>
</feature>
<feature type="binding site" evidence="1">
    <location>
        <begin position="83"/>
        <end position="84"/>
    </location>
    <ligand>
        <name>S-adenosyl-L-methionine</name>
        <dbReference type="ChEBI" id="CHEBI:59789"/>
    </ligand>
</feature>
<feature type="binding site" evidence="1">
    <location>
        <position position="124"/>
    </location>
    <ligand>
        <name>S-adenosyl-L-methionine</name>
        <dbReference type="ChEBI" id="CHEBI:59789"/>
    </ligand>
</feature>
<feature type="binding site" evidence="1">
    <location>
        <position position="191"/>
    </location>
    <ligand>
        <name>S-adenosyl-L-methionine</name>
        <dbReference type="ChEBI" id="CHEBI:59789"/>
    </ligand>
</feature>
<organism>
    <name type="scientific">Campylobacter jejuni subsp. doylei (strain ATCC BAA-1458 / RM4099 / 269.97)</name>
    <dbReference type="NCBI Taxonomy" id="360109"/>
    <lineage>
        <taxon>Bacteria</taxon>
        <taxon>Pseudomonadati</taxon>
        <taxon>Campylobacterota</taxon>
        <taxon>Epsilonproteobacteria</taxon>
        <taxon>Campylobacterales</taxon>
        <taxon>Campylobacteraceae</taxon>
        <taxon>Campylobacter</taxon>
    </lineage>
</organism>
<reference key="1">
    <citation type="submission" date="2007-07" db="EMBL/GenBank/DDBJ databases">
        <title>Complete genome sequence of Campylobacter jejuni subsp doylei 269.97 isolated from human blood.</title>
        <authorList>
            <person name="Fouts D.E."/>
            <person name="Mongodin E.F."/>
            <person name="Puiu D."/>
            <person name="Sebastian Y."/>
            <person name="Miller W.G."/>
            <person name="Mandrell R.E."/>
            <person name="Lastovica A.J."/>
            <person name="Nelson K.E."/>
        </authorList>
    </citation>
    <scope>NUCLEOTIDE SEQUENCE [LARGE SCALE GENOMIC DNA]</scope>
    <source>
        <strain>ATCC BAA-1458 / RM4099 / 269.97</strain>
    </source>
</reference>
<evidence type="ECO:0000255" key="1">
    <source>
        <dbReference type="HAMAP-Rule" id="MF_01589"/>
    </source>
</evidence>
<dbReference type="EC" id="2.1.3.-" evidence="1"/>
<dbReference type="EMBL" id="CP000768">
    <property type="protein sequence ID" value="ABS44643.1"/>
    <property type="molecule type" value="Genomic_DNA"/>
</dbReference>
<dbReference type="SMR" id="A7H3U1"/>
<dbReference type="KEGG" id="cjd:JJD26997_1078"/>
<dbReference type="HOGENOM" id="CLU_078475_0_0_7"/>
<dbReference type="Proteomes" id="UP000002302">
    <property type="component" value="Chromosome"/>
</dbReference>
<dbReference type="GO" id="GO:0016743">
    <property type="term" value="F:carboxyl- or carbamoyltransferase activity"/>
    <property type="evidence" value="ECO:0007669"/>
    <property type="project" value="UniProtKB-UniRule"/>
</dbReference>
<dbReference type="GO" id="GO:1904047">
    <property type="term" value="F:S-adenosyl-L-methionine binding"/>
    <property type="evidence" value="ECO:0007669"/>
    <property type="project" value="UniProtKB-UniRule"/>
</dbReference>
<dbReference type="GO" id="GO:0002098">
    <property type="term" value="P:tRNA wobble uridine modification"/>
    <property type="evidence" value="ECO:0007669"/>
    <property type="project" value="InterPro"/>
</dbReference>
<dbReference type="CDD" id="cd02440">
    <property type="entry name" value="AdoMet_MTases"/>
    <property type="match status" value="1"/>
</dbReference>
<dbReference type="Gene3D" id="3.40.50.150">
    <property type="entry name" value="Vaccinia Virus protein VP39"/>
    <property type="match status" value="1"/>
</dbReference>
<dbReference type="HAMAP" id="MF_01589">
    <property type="entry name" value="Cx_SAM_synthase"/>
    <property type="match status" value="1"/>
</dbReference>
<dbReference type="InterPro" id="IPR005271">
    <property type="entry name" value="CmoA"/>
</dbReference>
<dbReference type="InterPro" id="IPR041698">
    <property type="entry name" value="Methyltransf_25"/>
</dbReference>
<dbReference type="InterPro" id="IPR029063">
    <property type="entry name" value="SAM-dependent_MTases_sf"/>
</dbReference>
<dbReference type="NCBIfam" id="TIGR00740">
    <property type="entry name" value="carboxy-S-adenosyl-L-methionine synthase CmoA"/>
    <property type="match status" value="1"/>
</dbReference>
<dbReference type="PANTHER" id="PTHR43861:SF2">
    <property type="entry name" value="CARBOXY-S-ADENOSYL-L-METHIONINE SYNTHASE"/>
    <property type="match status" value="1"/>
</dbReference>
<dbReference type="PANTHER" id="PTHR43861">
    <property type="entry name" value="TRANS-ACONITATE 2-METHYLTRANSFERASE-RELATED"/>
    <property type="match status" value="1"/>
</dbReference>
<dbReference type="Pfam" id="PF13649">
    <property type="entry name" value="Methyltransf_25"/>
    <property type="match status" value="1"/>
</dbReference>
<dbReference type="PIRSF" id="PIRSF006325">
    <property type="entry name" value="MeTrfase_bac"/>
    <property type="match status" value="1"/>
</dbReference>
<dbReference type="SUPFAM" id="SSF53335">
    <property type="entry name" value="S-adenosyl-L-methionine-dependent methyltransferases"/>
    <property type="match status" value="1"/>
</dbReference>
<gene>
    <name evidence="1" type="primary">cmoA</name>
    <name type="ordered locus">JJD26997_1078</name>
</gene>
<protein>
    <recommendedName>
        <fullName evidence="1">Carboxy-S-adenosyl-L-methionine synthase</fullName>
        <shortName evidence="1">Cx-SAM synthase</shortName>
        <ecNumber evidence="1">2.1.3.-</ecNumber>
    </recommendedName>
</protein>
<accession>A7H3U1</accession>
<comment type="function">
    <text evidence="1">Catalyzes the conversion of S-adenosyl-L-methionine (SAM) to carboxy-S-adenosyl-L-methionine (Cx-SAM).</text>
</comment>
<comment type="catalytic activity">
    <reaction evidence="1">
        <text>prephenate + S-adenosyl-L-methionine = carboxy-S-adenosyl-L-methionine + 3-phenylpyruvate + H2O</text>
        <dbReference type="Rhea" id="RHEA:51692"/>
        <dbReference type="ChEBI" id="CHEBI:15377"/>
        <dbReference type="ChEBI" id="CHEBI:18005"/>
        <dbReference type="ChEBI" id="CHEBI:29934"/>
        <dbReference type="ChEBI" id="CHEBI:59789"/>
        <dbReference type="ChEBI" id="CHEBI:134278"/>
    </reaction>
</comment>
<comment type="subunit">
    <text evidence="1">Homodimer.</text>
</comment>
<comment type="similarity">
    <text evidence="1">Belongs to the class I-like SAM-binding methyltransferase superfamily. Cx-SAM synthase family.</text>
</comment>
<proteinExistence type="inferred from homology"/>
<keyword id="KW-0949">S-adenosyl-L-methionine</keyword>
<keyword id="KW-0808">Transferase</keyword>
<sequence length="235" mass="27220">MKDELFKQNPKKQFEFDKSVASVFDDMINRSVPFYRENLELCGNLLAKILPTNASICDLGCSSANFLIFLANLRKDFKLFGVDNSASMLEVAKSKAKAYGLDISFFEANLCEFDFFICDVFVANYTMQFIRPPKRQELLDKIYKNLNSKGILIMSEKILYEDAFLSKNIIELYADYKEKQGYSKFEIAAKREALENVLIPYSQKENLNMLEKAGFKKIESIFKWANFETFIAFKD</sequence>